<protein>
    <recommendedName>
        <fullName>Protein A52</fullName>
    </recommendedName>
</protein>
<evidence type="ECO:0000269" key="1">
    <source>
    </source>
</evidence>
<evidence type="ECO:0000269" key="2">
    <source>
    </source>
</evidence>
<evidence type="ECO:0000305" key="3"/>
<evidence type="ECO:0007829" key="4">
    <source>
        <dbReference type="PDB" id="2VVW"/>
    </source>
</evidence>
<feature type="chain" id="PRO_0000099350" description="Protein A52">
    <location>
        <begin position="1"/>
        <end position="190"/>
    </location>
</feature>
<feature type="helix" evidence="4">
    <location>
        <begin position="56"/>
        <end position="70"/>
    </location>
</feature>
<feature type="strand" evidence="4">
    <location>
        <begin position="72"/>
        <end position="74"/>
    </location>
</feature>
<feature type="helix" evidence="4">
    <location>
        <begin position="78"/>
        <end position="84"/>
    </location>
</feature>
<feature type="helix" evidence="4">
    <location>
        <begin position="86"/>
        <end position="94"/>
    </location>
</feature>
<feature type="helix" evidence="4">
    <location>
        <begin position="97"/>
        <end position="103"/>
    </location>
</feature>
<feature type="turn" evidence="4">
    <location>
        <begin position="104"/>
        <end position="107"/>
    </location>
</feature>
<feature type="helix" evidence="4">
    <location>
        <begin position="111"/>
        <end position="125"/>
    </location>
</feature>
<feature type="helix" evidence="4">
    <location>
        <begin position="131"/>
        <end position="150"/>
    </location>
</feature>
<feature type="helix" evidence="4">
    <location>
        <begin position="154"/>
        <end position="157"/>
    </location>
</feature>
<feature type="helix" evidence="4">
    <location>
        <begin position="158"/>
        <end position="167"/>
    </location>
</feature>
<feature type="helix" evidence="4">
    <location>
        <begin position="170"/>
        <end position="188"/>
    </location>
</feature>
<comment type="function">
    <text evidence="1">Bcl-2-like protein which targets host toll-like receptor signaling complexes to suppress innate immune response. Interacts with host TRAF6 to activate p38 and subsequently induce the expression of several cytokines such as IL-10. Also associates with host IRAK2 to inhibit NF-kappa-B signaling.</text>
</comment>
<comment type="subunit">
    <text evidence="2">Interacts with host TRAF6 and IRAK2.</text>
</comment>
<comment type="interaction">
    <interactant intactId="EBI-3863691">
        <id>Q01220</id>
    </interactant>
    <interactant intactId="EBI-359276">
        <id>Q9Y4K3</id>
        <label>TRAF6</label>
    </interactant>
    <organismsDiffer>true</organismsDiffer>
    <experiments>2</experiments>
</comment>
<comment type="similarity">
    <text evidence="3">Belongs to the orthopoxvirus A52R protein family.</text>
</comment>
<keyword id="KW-0002">3D-structure</keyword>
<keyword id="KW-0945">Host-virus interaction</keyword>
<keyword id="KW-1090">Inhibition of host innate immune response by virus</keyword>
<keyword id="KW-1100">Inhibition of host NF-kappa-B by virus</keyword>
<keyword id="KW-1113">Inhibition of host RLR pathway by virus</keyword>
<keyword id="KW-1110">Inhibition of host TRAFs by virus</keyword>
<keyword id="KW-1185">Reference proteome</keyword>
<keyword id="KW-0899">Viral immunoevasion</keyword>
<proteinExistence type="evidence at protein level"/>
<reference key="1">
    <citation type="journal article" date="1991" name="J. Gen. Virol.">
        <title>Nucleotide sequence of 42 kbp of vaccinia virus strain WR from near the right inverted terminal repeat.</title>
        <authorList>
            <person name="Smith G.L."/>
            <person name="Chan Y.S."/>
            <person name="Howard S.T."/>
        </authorList>
    </citation>
    <scope>NUCLEOTIDE SEQUENCE [GENOMIC DNA]</scope>
</reference>
<reference key="2">
    <citation type="submission" date="2003-02" db="EMBL/GenBank/DDBJ databases">
        <title>Sequencing of the coding region of Vaccinia-WR to an average 9-fold redundancy and an error rate of 0.16/10kb.</title>
        <authorList>
            <person name="Esposito J.J."/>
            <person name="Frace A.M."/>
            <person name="Sammons S.A."/>
            <person name="Olsen-Rasmussen M."/>
            <person name="Osborne J."/>
            <person name="Wohlhueter R."/>
        </authorList>
    </citation>
    <scope>NUCLEOTIDE SEQUENCE [LARGE SCALE GENOMIC DNA]</scope>
</reference>
<reference key="3">
    <citation type="journal article" date="2003" name="J. Exp. Med.">
        <title>The poxvirus protein A52R targets Toll-like receptor signaling complexes to suppress host defense.</title>
        <authorList>
            <person name="Harte M.T."/>
            <person name="Haga I.R."/>
            <person name="Maloney G."/>
            <person name="Gray P."/>
            <person name="Reading P.C."/>
            <person name="Bartlett N.W."/>
            <person name="Smith G.L."/>
            <person name="Bowie A."/>
            <person name="O'Neill L.A."/>
        </authorList>
    </citation>
    <scope>FUNCTION</scope>
</reference>
<reference key="4">
    <citation type="journal article" date="2005" name="J. Biol. Chem.">
        <title>Vaccinia virus protein A52R activates p38 mitogen-activated protein kinase and potentiates lipopolysaccharide-induced interleukin-10.</title>
        <authorList>
            <person name="Maloney G."/>
            <person name="Schroder M."/>
            <person name="Bowie A.G."/>
        </authorList>
    </citation>
    <scope>INTERACTION WITH HOST TRAF6 AND IRAK2</scope>
</reference>
<reference key="5">
    <citation type="journal article" date="2008" name="PLoS Pathog.">
        <title>Vaccinia virus proteins A52 and B14 Share a Bcl-2-like fold but have evolved to inhibit NF-kappaB rather than apoptosis.</title>
        <authorList>
            <person name="Graham S.C."/>
            <person name="Bahar M.W."/>
            <person name="Cooray S."/>
            <person name="Chen R.A."/>
            <person name="Whalen D.M."/>
            <person name="Abrescia N.G."/>
            <person name="Alderton D."/>
            <person name="Owens R.J."/>
            <person name="Stuart D.I."/>
            <person name="Smith G.L."/>
            <person name="Grimes J.M."/>
        </authorList>
    </citation>
    <scope>X-RAY CRYSTALLOGRAPHY (2.75 ANGSTROMS) OF 37-190</scope>
</reference>
<accession>Q01220</accession>
<accession>Q76ZM6</accession>
<gene>
    <name type="ordered locus">VACWR178</name>
    <name type="ORF">A52R</name>
</gene>
<organism>
    <name type="scientific">Vaccinia virus (strain Western Reserve)</name>
    <name type="common">VACV</name>
    <name type="synonym">Vaccinia virus (strain WR)</name>
    <dbReference type="NCBI Taxonomy" id="10254"/>
    <lineage>
        <taxon>Viruses</taxon>
        <taxon>Varidnaviria</taxon>
        <taxon>Bamfordvirae</taxon>
        <taxon>Nucleocytoviricota</taxon>
        <taxon>Pokkesviricetes</taxon>
        <taxon>Chitovirales</taxon>
        <taxon>Poxviridae</taxon>
        <taxon>Chordopoxvirinae</taxon>
        <taxon>Orthopoxvirus</taxon>
        <taxon>Vaccinia virus</taxon>
    </lineage>
</organism>
<name>A52_VACCW</name>
<sequence length="190" mass="22770">MDIKIDISISGDKFTVTTRRENEERKKYLPLQKEKTTDVIKPDYLEYDDLLDRDEMFTILEEYFMYRGLLGLRIKYGRLFNEIKKFDNDAEEQFGTIEELKQKLRLNSEEGADNFIDYIKVQKQDIVKLTVYDCISMIGLCACVVDVWRNEKLFSRWKYCLRAIKLFINDHMLDKIKSILQNRLVYVEMS</sequence>
<organismHost>
    <name type="scientific">Bos taurus</name>
    <name type="common">Bovine</name>
    <dbReference type="NCBI Taxonomy" id="9913"/>
</organismHost>
<dbReference type="EMBL" id="D11079">
    <property type="protein sequence ID" value="BAA01826.1"/>
    <property type="molecule type" value="Genomic_DNA"/>
</dbReference>
<dbReference type="EMBL" id="AY243312">
    <property type="protein sequence ID" value="AAO89457.1"/>
    <property type="molecule type" value="Genomic_DNA"/>
</dbReference>
<dbReference type="PIR" id="JQ1790">
    <property type="entry name" value="JQ1790"/>
</dbReference>
<dbReference type="RefSeq" id="YP_233060.1">
    <property type="nucleotide sequence ID" value="NC_006998.1"/>
</dbReference>
<dbReference type="PDB" id="2VVW">
    <property type="method" value="X-ray"/>
    <property type="resolution" value="1.90 A"/>
    <property type="chains" value="A/B=37-190"/>
</dbReference>
<dbReference type="PDB" id="2VVX">
    <property type="method" value="X-ray"/>
    <property type="resolution" value="2.75 A"/>
    <property type="chains" value="A/B=37-190"/>
</dbReference>
<dbReference type="PDBsum" id="2VVW"/>
<dbReference type="PDBsum" id="2VVX"/>
<dbReference type="SMR" id="Q01220"/>
<dbReference type="IntAct" id="Q01220">
    <property type="interactions" value="21"/>
</dbReference>
<dbReference type="DNASU" id="3707707"/>
<dbReference type="GeneID" id="3707707"/>
<dbReference type="KEGG" id="vg:3707707"/>
<dbReference type="EvolutionaryTrace" id="Q01220"/>
<dbReference type="Proteomes" id="UP000000344">
    <property type="component" value="Genome"/>
</dbReference>
<dbReference type="GO" id="GO:0030430">
    <property type="term" value="C:host cell cytoplasm"/>
    <property type="evidence" value="ECO:0000305"/>
    <property type="project" value="UniProt"/>
</dbReference>
<dbReference type="GO" id="GO:0140311">
    <property type="term" value="F:protein sequestering activity"/>
    <property type="evidence" value="ECO:0000314"/>
    <property type="project" value="UniProt"/>
</dbReference>
<dbReference type="GO" id="GO:0052170">
    <property type="term" value="P:symbiont-mediated suppression of host innate immune response"/>
    <property type="evidence" value="ECO:0007669"/>
    <property type="project" value="UniProtKB-KW"/>
</dbReference>
<dbReference type="GO" id="GO:0085034">
    <property type="term" value="P:symbiont-mediated suppression of host NF-kappaB cascade"/>
    <property type="evidence" value="ECO:0000314"/>
    <property type="project" value="UniProt"/>
</dbReference>
<dbReference type="GO" id="GO:0039527">
    <property type="term" value="P:symbiont-mediated suppression of host TRAF-mediated signal transduction"/>
    <property type="evidence" value="ECO:0007669"/>
    <property type="project" value="UniProtKB-KW"/>
</dbReference>
<dbReference type="Gene3D" id="1.10.437.20">
    <property type="entry name" value="dsDNA poxvirus"/>
    <property type="match status" value="1"/>
</dbReference>
<dbReference type="InterPro" id="IPR022819">
    <property type="entry name" value="Poxvirus_Bcl-2-like"/>
</dbReference>
<dbReference type="InterPro" id="IPR043018">
    <property type="entry name" value="Poxvirus_sf"/>
</dbReference>
<dbReference type="Pfam" id="PF06227">
    <property type="entry name" value="Poxv_Bcl-2-like"/>
    <property type="match status" value="1"/>
</dbReference>